<name>AROA_BUCCC</name>
<comment type="function">
    <text evidence="1">Catalyzes the transfer of the enolpyruvyl moiety of phosphoenolpyruvate (PEP) to the 5-hydroxyl of shikimate-3-phosphate (S3P) to produce enolpyruvyl shikimate-3-phosphate and inorganic phosphate.</text>
</comment>
<comment type="catalytic activity">
    <reaction evidence="1">
        <text>3-phosphoshikimate + phosphoenolpyruvate = 5-O-(1-carboxyvinyl)-3-phosphoshikimate + phosphate</text>
        <dbReference type="Rhea" id="RHEA:21256"/>
        <dbReference type="ChEBI" id="CHEBI:43474"/>
        <dbReference type="ChEBI" id="CHEBI:57701"/>
        <dbReference type="ChEBI" id="CHEBI:58702"/>
        <dbReference type="ChEBI" id="CHEBI:145989"/>
        <dbReference type="EC" id="2.5.1.19"/>
    </reaction>
    <physiologicalReaction direction="left-to-right" evidence="1">
        <dbReference type="Rhea" id="RHEA:21257"/>
    </physiologicalReaction>
</comment>
<comment type="pathway">
    <text evidence="1">Metabolic intermediate biosynthesis; chorismate biosynthesis; chorismate from D-erythrose 4-phosphate and phosphoenolpyruvate: step 6/7.</text>
</comment>
<comment type="subunit">
    <text evidence="1">Monomer.</text>
</comment>
<comment type="subcellular location">
    <subcellularLocation>
        <location evidence="1">Cytoplasm</location>
    </subcellularLocation>
</comment>
<comment type="similarity">
    <text evidence="1">Belongs to the EPSP synthase family.</text>
</comment>
<dbReference type="EC" id="2.5.1.19" evidence="1"/>
<dbReference type="EMBL" id="CP000263">
    <property type="protein sequence ID" value="ABJ90663.1"/>
    <property type="molecule type" value="Genomic_DNA"/>
</dbReference>
<dbReference type="RefSeq" id="WP_011672582.1">
    <property type="nucleotide sequence ID" value="NC_008513.1"/>
</dbReference>
<dbReference type="SMR" id="Q057N6"/>
<dbReference type="STRING" id="372461.BCc_191"/>
<dbReference type="KEGG" id="bcc:BCc_191"/>
<dbReference type="eggNOG" id="COG0128">
    <property type="taxonomic scope" value="Bacteria"/>
</dbReference>
<dbReference type="HOGENOM" id="CLU_024321_0_0_6"/>
<dbReference type="OrthoDB" id="9809920at2"/>
<dbReference type="UniPathway" id="UPA00053">
    <property type="reaction ID" value="UER00089"/>
</dbReference>
<dbReference type="Proteomes" id="UP000000669">
    <property type="component" value="Chromosome"/>
</dbReference>
<dbReference type="GO" id="GO:0005737">
    <property type="term" value="C:cytoplasm"/>
    <property type="evidence" value="ECO:0007669"/>
    <property type="project" value="UniProtKB-SubCell"/>
</dbReference>
<dbReference type="GO" id="GO:0003866">
    <property type="term" value="F:3-phosphoshikimate 1-carboxyvinyltransferase activity"/>
    <property type="evidence" value="ECO:0007669"/>
    <property type="project" value="UniProtKB-UniRule"/>
</dbReference>
<dbReference type="GO" id="GO:0008652">
    <property type="term" value="P:amino acid biosynthetic process"/>
    <property type="evidence" value="ECO:0007669"/>
    <property type="project" value="UniProtKB-KW"/>
</dbReference>
<dbReference type="GO" id="GO:0009073">
    <property type="term" value="P:aromatic amino acid family biosynthetic process"/>
    <property type="evidence" value="ECO:0007669"/>
    <property type="project" value="UniProtKB-KW"/>
</dbReference>
<dbReference type="GO" id="GO:0009423">
    <property type="term" value="P:chorismate biosynthetic process"/>
    <property type="evidence" value="ECO:0007669"/>
    <property type="project" value="UniProtKB-UniRule"/>
</dbReference>
<dbReference type="CDD" id="cd01556">
    <property type="entry name" value="EPSP_synthase"/>
    <property type="match status" value="1"/>
</dbReference>
<dbReference type="FunFam" id="3.65.10.10:FF:000004">
    <property type="entry name" value="3-phosphoshikimate 1-carboxyvinyltransferase"/>
    <property type="match status" value="1"/>
</dbReference>
<dbReference type="Gene3D" id="3.65.10.10">
    <property type="entry name" value="Enolpyruvate transferase domain"/>
    <property type="match status" value="2"/>
</dbReference>
<dbReference type="HAMAP" id="MF_00210">
    <property type="entry name" value="EPSP_synth"/>
    <property type="match status" value="1"/>
</dbReference>
<dbReference type="InterPro" id="IPR001986">
    <property type="entry name" value="Enolpyruvate_Tfrase_dom"/>
</dbReference>
<dbReference type="InterPro" id="IPR036968">
    <property type="entry name" value="Enolpyruvate_Tfrase_sf"/>
</dbReference>
<dbReference type="InterPro" id="IPR006264">
    <property type="entry name" value="EPSP_synthase"/>
</dbReference>
<dbReference type="InterPro" id="IPR023193">
    <property type="entry name" value="EPSP_synthase_CS"/>
</dbReference>
<dbReference type="InterPro" id="IPR013792">
    <property type="entry name" value="RNA3'P_cycl/enolpyr_Trfase_a/b"/>
</dbReference>
<dbReference type="NCBIfam" id="TIGR01356">
    <property type="entry name" value="aroA"/>
    <property type="match status" value="1"/>
</dbReference>
<dbReference type="PANTHER" id="PTHR21090">
    <property type="entry name" value="AROM/DEHYDROQUINATE SYNTHASE"/>
    <property type="match status" value="1"/>
</dbReference>
<dbReference type="PANTHER" id="PTHR21090:SF5">
    <property type="entry name" value="PENTAFUNCTIONAL AROM POLYPEPTIDE"/>
    <property type="match status" value="1"/>
</dbReference>
<dbReference type="Pfam" id="PF00275">
    <property type="entry name" value="EPSP_synthase"/>
    <property type="match status" value="1"/>
</dbReference>
<dbReference type="PIRSF" id="PIRSF000505">
    <property type="entry name" value="EPSPS"/>
    <property type="match status" value="1"/>
</dbReference>
<dbReference type="SUPFAM" id="SSF55205">
    <property type="entry name" value="EPT/RTPC-like"/>
    <property type="match status" value="1"/>
</dbReference>
<dbReference type="PROSITE" id="PS00104">
    <property type="entry name" value="EPSP_SYNTHASE_1"/>
    <property type="match status" value="1"/>
</dbReference>
<dbReference type="PROSITE" id="PS00885">
    <property type="entry name" value="EPSP_SYNTHASE_2"/>
    <property type="match status" value="1"/>
</dbReference>
<sequence>MQDSLTLKPVDYIQGKINIPGSKSISNRVLLLSALSNGKTILKNLLYSDDIKYMLKALLKLGIFYKLDKKKSKCTIYGISDAFSVKNKIKLFLGNAGTAMRPLLAILSLKKNKIILTGEKRMKERPIHHLVDSLRQGGANITYKNKKKFPPLYIKGGFKGGKIFIDGSISSQFLSSLLMAAPLAELDTEIIVKNQLVSKPYINLTINLMEKFGISVSILNDYKHFYIKGNQKYISPKKYYIESDLSSATYFLAAAAIKGGSIQINGIQKKSIQGDINFIKILKQMGVSIQWKKNSVICKKNKLLGITVDCNHIPDAAMTIAILGVFSKKKVYIKNIYNWRVKETDRIYAMSTELKKIGARVITGKDYIKVYPVKNFIHAKINTYNDHRIAMCFSLISLSGTSVTLLNPKCVNKTFPSFFKNFYSICHYSNINKNI</sequence>
<accession>Q057N6</accession>
<keyword id="KW-0028">Amino-acid biosynthesis</keyword>
<keyword id="KW-0057">Aromatic amino acid biosynthesis</keyword>
<keyword id="KW-0963">Cytoplasm</keyword>
<keyword id="KW-1185">Reference proteome</keyword>
<keyword id="KW-0808">Transferase</keyword>
<reference key="1">
    <citation type="journal article" date="2006" name="Science">
        <title>A small microbial genome: the end of a long symbiotic relationship?</title>
        <authorList>
            <person name="Perez-Brocal V."/>
            <person name="Gil R."/>
            <person name="Ramos S."/>
            <person name="Lamelas A."/>
            <person name="Postigo M."/>
            <person name="Michelena J.M."/>
            <person name="Silva F.J."/>
            <person name="Moya A."/>
            <person name="Latorre A."/>
        </authorList>
    </citation>
    <scope>NUCLEOTIDE SEQUENCE [LARGE SCALE GENOMIC DNA]</scope>
    <source>
        <strain>Cc</strain>
    </source>
</reference>
<organism>
    <name type="scientific">Buchnera aphidicola subsp. Cinara cedri (strain Cc)</name>
    <dbReference type="NCBI Taxonomy" id="372461"/>
    <lineage>
        <taxon>Bacteria</taxon>
        <taxon>Pseudomonadati</taxon>
        <taxon>Pseudomonadota</taxon>
        <taxon>Gammaproteobacteria</taxon>
        <taxon>Enterobacterales</taxon>
        <taxon>Erwiniaceae</taxon>
        <taxon>Buchnera</taxon>
    </lineage>
</organism>
<feature type="chain" id="PRO_1000012415" description="3-phosphoshikimate 1-carboxyvinyltransferase">
    <location>
        <begin position="1"/>
        <end position="435"/>
    </location>
</feature>
<feature type="active site" description="Proton acceptor" evidence="1">
    <location>
        <position position="315"/>
    </location>
</feature>
<feature type="binding site" evidence="1">
    <location>
        <position position="23"/>
    </location>
    <ligand>
        <name>3-phosphoshikimate</name>
        <dbReference type="ChEBI" id="CHEBI:145989"/>
    </ligand>
</feature>
<feature type="binding site" evidence="1">
    <location>
        <position position="23"/>
    </location>
    <ligand>
        <name>phosphoenolpyruvate</name>
        <dbReference type="ChEBI" id="CHEBI:58702"/>
    </ligand>
</feature>
<feature type="binding site" evidence="1">
    <location>
        <position position="24"/>
    </location>
    <ligand>
        <name>3-phosphoshikimate</name>
        <dbReference type="ChEBI" id="CHEBI:145989"/>
    </ligand>
</feature>
<feature type="binding site" evidence="1">
    <location>
        <position position="28"/>
    </location>
    <ligand>
        <name>3-phosphoshikimate</name>
        <dbReference type="ChEBI" id="CHEBI:145989"/>
    </ligand>
</feature>
<feature type="binding site" evidence="1">
    <location>
        <position position="97"/>
    </location>
    <ligand>
        <name>phosphoenolpyruvate</name>
        <dbReference type="ChEBI" id="CHEBI:58702"/>
    </ligand>
</feature>
<feature type="binding site" evidence="1">
    <location>
        <position position="125"/>
    </location>
    <ligand>
        <name>phosphoenolpyruvate</name>
        <dbReference type="ChEBI" id="CHEBI:58702"/>
    </ligand>
</feature>
<feature type="binding site" evidence="1">
    <location>
        <position position="170"/>
    </location>
    <ligand>
        <name>3-phosphoshikimate</name>
        <dbReference type="ChEBI" id="CHEBI:145989"/>
    </ligand>
</feature>
<feature type="binding site" evidence="1">
    <location>
        <position position="171"/>
    </location>
    <ligand>
        <name>3-phosphoshikimate</name>
        <dbReference type="ChEBI" id="CHEBI:145989"/>
    </ligand>
</feature>
<feature type="binding site" evidence="1">
    <location>
        <position position="172"/>
    </location>
    <ligand>
        <name>3-phosphoshikimate</name>
        <dbReference type="ChEBI" id="CHEBI:145989"/>
    </ligand>
</feature>
<feature type="binding site" evidence="1">
    <location>
        <position position="172"/>
    </location>
    <ligand>
        <name>phosphoenolpyruvate</name>
        <dbReference type="ChEBI" id="CHEBI:58702"/>
    </ligand>
</feature>
<feature type="binding site" evidence="1">
    <location>
        <position position="198"/>
    </location>
    <ligand>
        <name>3-phosphoshikimate</name>
        <dbReference type="ChEBI" id="CHEBI:145989"/>
    </ligand>
</feature>
<feature type="binding site" evidence="1">
    <location>
        <position position="315"/>
    </location>
    <ligand>
        <name>3-phosphoshikimate</name>
        <dbReference type="ChEBI" id="CHEBI:145989"/>
    </ligand>
</feature>
<feature type="binding site" evidence="1">
    <location>
        <position position="338"/>
    </location>
    <ligand>
        <name>3-phosphoshikimate</name>
        <dbReference type="ChEBI" id="CHEBI:145989"/>
    </ligand>
</feature>
<feature type="binding site" evidence="1">
    <location>
        <position position="342"/>
    </location>
    <ligand>
        <name>3-phosphoshikimate</name>
        <dbReference type="ChEBI" id="CHEBI:145989"/>
    </ligand>
</feature>
<feature type="binding site" evidence="1">
    <location>
        <position position="346"/>
    </location>
    <ligand>
        <name>phosphoenolpyruvate</name>
        <dbReference type="ChEBI" id="CHEBI:58702"/>
    </ligand>
</feature>
<feature type="binding site" evidence="1">
    <location>
        <position position="388"/>
    </location>
    <ligand>
        <name>phosphoenolpyruvate</name>
        <dbReference type="ChEBI" id="CHEBI:58702"/>
    </ligand>
</feature>
<feature type="binding site" evidence="1">
    <location>
        <position position="413"/>
    </location>
    <ligand>
        <name>phosphoenolpyruvate</name>
        <dbReference type="ChEBI" id="CHEBI:58702"/>
    </ligand>
</feature>
<protein>
    <recommendedName>
        <fullName evidence="1">3-phosphoshikimate 1-carboxyvinyltransferase</fullName>
        <ecNumber evidence="1">2.5.1.19</ecNumber>
    </recommendedName>
    <alternativeName>
        <fullName evidence="1">5-enolpyruvylshikimate-3-phosphate synthase</fullName>
        <shortName evidence="1">EPSP synthase</shortName>
        <shortName evidence="1">EPSPS</shortName>
    </alternativeName>
</protein>
<proteinExistence type="inferred from homology"/>
<gene>
    <name evidence="1" type="primary">aroA</name>
    <name type="ordered locus">BCc_191</name>
</gene>
<evidence type="ECO:0000255" key="1">
    <source>
        <dbReference type="HAMAP-Rule" id="MF_00210"/>
    </source>
</evidence>